<name>E3B14_ADE06</name>
<sequence length="130" mass="14558">MKRIVTFVLLIFCALPVLCSQTSAPPKRHISCRFTQIWNIPSCYNKQSDLSEAWLYAIISVMVFCSTIFALAIYPYLDIGWNAIDAMNHPTFPAPNVIPLQQVIAPINQPRPPSPTPTEISYFNLTGGDD</sequence>
<organism>
    <name type="scientific">Human adenovirus C serotype 6</name>
    <name type="common">HAdV-6</name>
    <name type="synonym">Human adenovirus 6</name>
    <dbReference type="NCBI Taxonomy" id="10534"/>
    <lineage>
        <taxon>Viruses</taxon>
        <taxon>Varidnaviria</taxon>
        <taxon>Bamfordvirae</taxon>
        <taxon>Preplasmiviricota</taxon>
        <taxon>Tectiliviricetes</taxon>
        <taxon>Rowavirales</taxon>
        <taxon>Adenoviridae</taxon>
        <taxon>Mastadenovirus</taxon>
        <taxon>Human mastadenovirus C</taxon>
    </lineage>
</organism>
<feature type="signal peptide" evidence="1">
    <location>
        <begin position="1"/>
        <end position="19"/>
    </location>
</feature>
<feature type="chain" id="PRO_0000036477" description="Early E3B 14.5 kDa protein">
    <location>
        <begin position="20"/>
        <end position="130"/>
    </location>
</feature>
<feature type="transmembrane region" description="Helical" evidence="2">
    <location>
        <begin position="53"/>
        <end position="77"/>
    </location>
</feature>
<reference key="1">
    <citation type="submission" date="1997-12" db="EMBL/GenBank/DDBJ databases">
        <title>Sequence analysis of group C human adenoviruses type 1 and 6 for five genes of region E3.</title>
        <authorList>
            <person name="Reichmann H."/>
            <person name="Schaarschmidt E."/>
            <person name="Geisler B."/>
            <person name="Hausmann J."/>
            <person name="Ortmann D."/>
            <person name="Bauer U."/>
            <person name="Flunker G."/>
            <person name="Seidel W."/>
        </authorList>
    </citation>
    <scope>NUCLEOTIDE SEQUENCE [GENOMIC DNA]</scope>
</reference>
<accession>O55655</accession>
<proteinExistence type="inferred from homology"/>
<keyword id="KW-0244">Early protein</keyword>
<keyword id="KW-0325">Glycoprotein</keyword>
<keyword id="KW-1043">Host membrane</keyword>
<keyword id="KW-0472">Membrane</keyword>
<keyword id="KW-0597">Phosphoprotein</keyword>
<keyword id="KW-0732">Signal</keyword>
<keyword id="KW-0812">Transmembrane</keyword>
<keyword id="KW-1133">Transmembrane helix</keyword>
<organismHost>
    <name type="scientific">Homo sapiens</name>
    <name type="common">Human</name>
    <dbReference type="NCBI Taxonomy" id="9606"/>
</organismHost>
<evidence type="ECO:0000250" key="1"/>
<evidence type="ECO:0000255" key="2"/>
<evidence type="ECO:0000305" key="3"/>
<comment type="function">
    <text evidence="1">Down-regulates the EGF receptor and prevents cytolysis by TNF.</text>
</comment>
<comment type="subcellular location">
    <subcellularLocation>
        <location evidence="3">Host membrane</location>
        <topology evidence="3">Single-pass membrane protein</topology>
    </subcellularLocation>
</comment>
<comment type="PTM">
    <text evidence="1">Phosphorylated on serine; O-glycosylated, but not N-glycosylated.</text>
</comment>
<comment type="similarity">
    <text evidence="3">Belongs to the adenoviridae E3_14 family.</text>
</comment>
<dbReference type="EMBL" id="Y16037">
    <property type="protein sequence ID" value="CAA75993.1"/>
    <property type="molecule type" value="Genomic_DNA"/>
</dbReference>
<dbReference type="GO" id="GO:0033644">
    <property type="term" value="C:host cell membrane"/>
    <property type="evidence" value="ECO:0007669"/>
    <property type="project" value="UniProtKB-SubCell"/>
</dbReference>
<dbReference type="GO" id="GO:0016020">
    <property type="term" value="C:membrane"/>
    <property type="evidence" value="ECO:0007669"/>
    <property type="project" value="UniProtKB-KW"/>
</dbReference>
<dbReference type="GO" id="GO:0009966">
    <property type="term" value="P:regulation of signal transduction"/>
    <property type="evidence" value="ECO:0007669"/>
    <property type="project" value="InterPro"/>
</dbReference>
<dbReference type="InterPro" id="IPR008131">
    <property type="entry name" value="Adeno_E3_14_5"/>
</dbReference>
<dbReference type="Pfam" id="PF04834">
    <property type="entry name" value="Adeno_E3_14_5"/>
    <property type="match status" value="1"/>
</dbReference>
<protein>
    <recommendedName>
        <fullName>Early E3B 14.5 kDa protein</fullName>
    </recommendedName>
</protein>